<reference key="1">
    <citation type="journal article" date="2005" name="Science">
        <title>The transcriptional landscape of the mammalian genome.</title>
        <authorList>
            <person name="Carninci P."/>
            <person name="Kasukawa T."/>
            <person name="Katayama S."/>
            <person name="Gough J."/>
            <person name="Frith M.C."/>
            <person name="Maeda N."/>
            <person name="Oyama R."/>
            <person name="Ravasi T."/>
            <person name="Lenhard B."/>
            <person name="Wells C."/>
            <person name="Kodzius R."/>
            <person name="Shimokawa K."/>
            <person name="Bajic V.B."/>
            <person name="Brenner S.E."/>
            <person name="Batalov S."/>
            <person name="Forrest A.R."/>
            <person name="Zavolan M."/>
            <person name="Davis M.J."/>
            <person name="Wilming L.G."/>
            <person name="Aidinis V."/>
            <person name="Allen J.E."/>
            <person name="Ambesi-Impiombato A."/>
            <person name="Apweiler R."/>
            <person name="Aturaliya R.N."/>
            <person name="Bailey T.L."/>
            <person name="Bansal M."/>
            <person name="Baxter L."/>
            <person name="Beisel K.W."/>
            <person name="Bersano T."/>
            <person name="Bono H."/>
            <person name="Chalk A.M."/>
            <person name="Chiu K.P."/>
            <person name="Choudhary V."/>
            <person name="Christoffels A."/>
            <person name="Clutterbuck D.R."/>
            <person name="Crowe M.L."/>
            <person name="Dalla E."/>
            <person name="Dalrymple B.P."/>
            <person name="de Bono B."/>
            <person name="Della Gatta G."/>
            <person name="di Bernardo D."/>
            <person name="Down T."/>
            <person name="Engstrom P."/>
            <person name="Fagiolini M."/>
            <person name="Faulkner G."/>
            <person name="Fletcher C.F."/>
            <person name="Fukushima T."/>
            <person name="Furuno M."/>
            <person name="Futaki S."/>
            <person name="Gariboldi M."/>
            <person name="Georgii-Hemming P."/>
            <person name="Gingeras T.R."/>
            <person name="Gojobori T."/>
            <person name="Green R.E."/>
            <person name="Gustincich S."/>
            <person name="Harbers M."/>
            <person name="Hayashi Y."/>
            <person name="Hensch T.K."/>
            <person name="Hirokawa N."/>
            <person name="Hill D."/>
            <person name="Huminiecki L."/>
            <person name="Iacono M."/>
            <person name="Ikeo K."/>
            <person name="Iwama A."/>
            <person name="Ishikawa T."/>
            <person name="Jakt M."/>
            <person name="Kanapin A."/>
            <person name="Katoh M."/>
            <person name="Kawasawa Y."/>
            <person name="Kelso J."/>
            <person name="Kitamura H."/>
            <person name="Kitano H."/>
            <person name="Kollias G."/>
            <person name="Krishnan S.P."/>
            <person name="Kruger A."/>
            <person name="Kummerfeld S.K."/>
            <person name="Kurochkin I.V."/>
            <person name="Lareau L.F."/>
            <person name="Lazarevic D."/>
            <person name="Lipovich L."/>
            <person name="Liu J."/>
            <person name="Liuni S."/>
            <person name="McWilliam S."/>
            <person name="Madan Babu M."/>
            <person name="Madera M."/>
            <person name="Marchionni L."/>
            <person name="Matsuda H."/>
            <person name="Matsuzawa S."/>
            <person name="Miki H."/>
            <person name="Mignone F."/>
            <person name="Miyake S."/>
            <person name="Morris K."/>
            <person name="Mottagui-Tabar S."/>
            <person name="Mulder N."/>
            <person name="Nakano N."/>
            <person name="Nakauchi H."/>
            <person name="Ng P."/>
            <person name="Nilsson R."/>
            <person name="Nishiguchi S."/>
            <person name="Nishikawa S."/>
            <person name="Nori F."/>
            <person name="Ohara O."/>
            <person name="Okazaki Y."/>
            <person name="Orlando V."/>
            <person name="Pang K.C."/>
            <person name="Pavan W.J."/>
            <person name="Pavesi G."/>
            <person name="Pesole G."/>
            <person name="Petrovsky N."/>
            <person name="Piazza S."/>
            <person name="Reed J."/>
            <person name="Reid J.F."/>
            <person name="Ring B.Z."/>
            <person name="Ringwald M."/>
            <person name="Rost B."/>
            <person name="Ruan Y."/>
            <person name="Salzberg S.L."/>
            <person name="Sandelin A."/>
            <person name="Schneider C."/>
            <person name="Schoenbach C."/>
            <person name="Sekiguchi K."/>
            <person name="Semple C.A."/>
            <person name="Seno S."/>
            <person name="Sessa L."/>
            <person name="Sheng Y."/>
            <person name="Shibata Y."/>
            <person name="Shimada H."/>
            <person name="Shimada K."/>
            <person name="Silva D."/>
            <person name="Sinclair B."/>
            <person name="Sperling S."/>
            <person name="Stupka E."/>
            <person name="Sugiura K."/>
            <person name="Sultana R."/>
            <person name="Takenaka Y."/>
            <person name="Taki K."/>
            <person name="Tammoja K."/>
            <person name="Tan S.L."/>
            <person name="Tang S."/>
            <person name="Taylor M.S."/>
            <person name="Tegner J."/>
            <person name="Teichmann S.A."/>
            <person name="Ueda H.R."/>
            <person name="van Nimwegen E."/>
            <person name="Verardo R."/>
            <person name="Wei C.L."/>
            <person name="Yagi K."/>
            <person name="Yamanishi H."/>
            <person name="Zabarovsky E."/>
            <person name="Zhu S."/>
            <person name="Zimmer A."/>
            <person name="Hide W."/>
            <person name="Bult C."/>
            <person name="Grimmond S.M."/>
            <person name="Teasdale R.D."/>
            <person name="Liu E.T."/>
            <person name="Brusic V."/>
            <person name="Quackenbush J."/>
            <person name="Wahlestedt C."/>
            <person name="Mattick J.S."/>
            <person name="Hume D.A."/>
            <person name="Kai C."/>
            <person name="Sasaki D."/>
            <person name="Tomaru Y."/>
            <person name="Fukuda S."/>
            <person name="Kanamori-Katayama M."/>
            <person name="Suzuki M."/>
            <person name="Aoki J."/>
            <person name="Arakawa T."/>
            <person name="Iida J."/>
            <person name="Imamura K."/>
            <person name="Itoh M."/>
            <person name="Kato T."/>
            <person name="Kawaji H."/>
            <person name="Kawagashira N."/>
            <person name="Kawashima T."/>
            <person name="Kojima M."/>
            <person name="Kondo S."/>
            <person name="Konno H."/>
            <person name="Nakano K."/>
            <person name="Ninomiya N."/>
            <person name="Nishio T."/>
            <person name="Okada M."/>
            <person name="Plessy C."/>
            <person name="Shibata K."/>
            <person name="Shiraki T."/>
            <person name="Suzuki S."/>
            <person name="Tagami M."/>
            <person name="Waki K."/>
            <person name="Watahiki A."/>
            <person name="Okamura-Oho Y."/>
            <person name="Suzuki H."/>
            <person name="Kawai J."/>
            <person name="Hayashizaki Y."/>
        </authorList>
    </citation>
    <scope>NUCLEOTIDE SEQUENCE [LARGE SCALE MRNA] (ISOFORM 2)</scope>
    <source>
        <strain>C57BL/6J</strain>
        <tissue>Testis</tissue>
    </source>
</reference>
<reference key="2">
    <citation type="journal article" date="2009" name="PLoS Biol.">
        <title>Lineage-specific biology revealed by a finished genome assembly of the mouse.</title>
        <authorList>
            <person name="Church D.M."/>
            <person name="Goodstadt L."/>
            <person name="Hillier L.W."/>
            <person name="Zody M.C."/>
            <person name="Goldstein S."/>
            <person name="She X."/>
            <person name="Bult C.J."/>
            <person name="Agarwala R."/>
            <person name="Cherry J.L."/>
            <person name="DiCuccio M."/>
            <person name="Hlavina W."/>
            <person name="Kapustin Y."/>
            <person name="Meric P."/>
            <person name="Maglott D."/>
            <person name="Birtle Z."/>
            <person name="Marques A.C."/>
            <person name="Graves T."/>
            <person name="Zhou S."/>
            <person name="Teague B."/>
            <person name="Potamousis K."/>
            <person name="Churas C."/>
            <person name="Place M."/>
            <person name="Herschleb J."/>
            <person name="Runnheim R."/>
            <person name="Forrest D."/>
            <person name="Amos-Landgraf J."/>
            <person name="Schwartz D.C."/>
            <person name="Cheng Z."/>
            <person name="Lindblad-Toh K."/>
            <person name="Eichler E.E."/>
            <person name="Ponting C.P."/>
        </authorList>
    </citation>
    <scope>NUCLEOTIDE SEQUENCE [LARGE SCALE GENOMIC DNA]</scope>
    <source>
        <strain>C57BL/6J</strain>
    </source>
</reference>
<reference key="3">
    <citation type="journal article" date="2004" name="Genome Res.">
        <title>The status, quality, and expansion of the NIH full-length cDNA project: the Mammalian Gene Collection (MGC).</title>
        <authorList>
            <consortium name="The MGC Project Team"/>
        </authorList>
    </citation>
    <scope>NUCLEOTIDE SEQUENCE [LARGE SCALE MRNA] (ISOFORM 1)</scope>
</reference>
<reference key="4">
    <citation type="submission" date="2005-02" db="EMBL/GenBank/DDBJ databases">
        <title>Prediction of the coding sequences of mouse homologues of KIAA gene. The complete nucleotide sequences of mouse KIAA-homologous cDNAs identified by screening of terminal sequences of cDNA clones randomly sampled from size-fractionated libraries.</title>
        <authorList>
            <person name="Okazaki N."/>
            <person name="Kikuno R.F."/>
            <person name="Ohara R."/>
            <person name="Inamoto S."/>
            <person name="Seino S."/>
            <person name="Nishimura M."/>
            <person name="Nagase T."/>
            <person name="Ohara O."/>
            <person name="Koga H."/>
        </authorList>
    </citation>
    <scope>NUCLEOTIDE SEQUENCE [LARGE SCALE MRNA] OF 183-968 (ISOFORMS 1/2)</scope>
    <source>
        <tissue>Pancreatic islet</tissue>
    </source>
</reference>
<reference key="5">
    <citation type="journal article" date="2002" name="J. Biol. Chem.">
        <title>JEAP, a novel component of tight junctions in exocrine cells.</title>
        <authorList>
            <person name="Nishimura M."/>
            <person name="Kakizaki M."/>
            <person name="Ono Y."/>
            <person name="Morimoto K."/>
            <person name="Takeuchi M."/>
            <person name="Inoue Y."/>
            <person name="Imai T."/>
            <person name="Takai Y."/>
        </authorList>
    </citation>
    <scope>SUBCELLULAR LOCATION</scope>
    <scope>TISSUE SPECIFICITY</scope>
</reference>
<reference key="6">
    <citation type="journal article" date="2010" name="Cell">
        <title>A tissue-specific atlas of mouse protein phosphorylation and expression.</title>
        <authorList>
            <person name="Huttlin E.L."/>
            <person name="Jedrychowski M.P."/>
            <person name="Elias J.E."/>
            <person name="Goswami T."/>
            <person name="Rad R."/>
            <person name="Beausoleil S.A."/>
            <person name="Villen J."/>
            <person name="Haas W."/>
            <person name="Sowa M.E."/>
            <person name="Gygi S.P."/>
        </authorList>
    </citation>
    <scope>PHOSPHORYLATION [LARGE SCALE ANALYSIS] AT SER-816</scope>
    <scope>IDENTIFICATION BY MASS SPECTROMETRY [LARGE SCALE ANALYSIS]</scope>
    <source>
        <tissue>Kidney</tissue>
        <tissue>Lung</tissue>
    </source>
</reference>
<protein>
    <recommendedName>
        <fullName>Angiomotin-like protein 1</fullName>
    </recommendedName>
    <alternativeName>
        <fullName>junction-enriched and -associated protein</fullName>
        <shortName>JEAP</shortName>
    </alternativeName>
</protein>
<keyword id="KW-0025">Alternative splicing</keyword>
<keyword id="KW-0965">Cell junction</keyword>
<keyword id="KW-0175">Coiled coil</keyword>
<keyword id="KW-0597">Phosphoprotein</keyword>
<keyword id="KW-1185">Reference proteome</keyword>
<keyword id="KW-0796">Tight junction</keyword>
<keyword id="KW-0832">Ubl conjugation</keyword>
<keyword id="KW-0879">Wnt signaling pathway</keyword>
<sequence>MRRAKSRRGPCEPVLRAPPPICYSPSSPVQILEDPAYFYPDLQLYSGRHEASTLTVEASGGLRGKSVEDPLSSFHSPNFLRTPEVEMRGSEDVASGRVLQRLIQEQLRYGTPTENMNLLAIQHQATGSAGPAHATTNFSSTETLTQEDPQMVYQSARQEPQGQEHQGDNTVMEKQVRSTQPQQNNEELPTYEEAKAQSQFFRGQQQQQQQQQQQQQQQQQQGQGPLSHTYYMAGGTSQKSRTEGRPTVNRANSGQAHKDEALKELKQGHVRSLSERIMQLSLERNGAKQHLPSSGNGKSFKAGGEPSPAQPVCKALDPRGPPPEYPFKTKPMKSPVSKNQDHGLYYNDQHPGVLHEMVKPYPAPQPARTEVAVLRYQPPPEYGVTSRPCQLPFPSTVQQHSPMSSQTSSIGGTLHSVSLPLPLPISLAASQPLPASPNQQLGPDAFAIVERAQQMVEILTEENRVLHQELQGCYDNADKLHKFEKELQSISEAYESLVKSTTKRESLDKAMRTKLEGEIRRLHDFNRDLRDRLETANRQLSSREYDGHEDKAAESHYVSQNKEFLKEKEKLEMELAAVRTASEDHRRHIEILDQALSNAQARVIKLEEELREKQAYVEKVEKLQQALTQLQSACEKRGQMERRLRTWLERELDALRTQQKHGTGPPVSLPECNAPALMELVREKEERILALEADMTKWEQKYLEESTIRHFAMSAAAAATAERDTTISNHSRNGSYGESSLEAHIWPEEEEVVQANRRCQDMEYTIKNLHAKIIEKDAMIKVLQQRSRKDAGKTDSASLRPARSVPSIAAATGTHSRQTSLTSSQLTEEKKEEKTTWKGSIGFLLGKEHQGQASAPLLPTTPASALSLPASTTSASSTHAKTGSKDSSTQTDKSTELFWPSMASLPSRGRLSTAPSNSPILKHPAAKGAVEKQENSPGHGKASEHRGRVSNLLHKPEFPDGEMMEVLI</sequence>
<dbReference type="EMBL" id="AK016526">
    <property type="protein sequence ID" value="BAB30287.1"/>
    <property type="molecule type" value="mRNA"/>
</dbReference>
<dbReference type="EMBL" id="CT030247">
    <property type="status" value="NOT_ANNOTATED_CDS"/>
    <property type="molecule type" value="Genomic_DNA"/>
</dbReference>
<dbReference type="EMBL" id="CT485607">
    <property type="status" value="NOT_ANNOTATED_CDS"/>
    <property type="molecule type" value="Genomic_DNA"/>
</dbReference>
<dbReference type="EMBL" id="BC151000">
    <property type="protein sequence ID" value="AAI51001.1"/>
    <property type="molecule type" value="mRNA"/>
</dbReference>
<dbReference type="EMBL" id="BC151004">
    <property type="protein sequence ID" value="AAI51005.1"/>
    <property type="molecule type" value="mRNA"/>
</dbReference>
<dbReference type="EMBL" id="BC151007">
    <property type="protein sequence ID" value="AAI51008.1"/>
    <property type="molecule type" value="mRNA"/>
</dbReference>
<dbReference type="EMBL" id="AK220238">
    <property type="protein sequence ID" value="BAD90163.1"/>
    <property type="molecule type" value="mRNA"/>
</dbReference>
<dbReference type="CCDS" id="CCDS40535.1">
    <molecule id="Q9D4H4-1"/>
</dbReference>
<dbReference type="RefSeq" id="NP_001074864.1">
    <molecule id="Q9D4H4-1"/>
    <property type="nucleotide sequence ID" value="NM_001081395.1"/>
</dbReference>
<dbReference type="RefSeq" id="XP_006510731.1">
    <molecule id="Q9D4H4-2"/>
    <property type="nucleotide sequence ID" value="XM_006510668.2"/>
</dbReference>
<dbReference type="RefSeq" id="XP_006510732.1">
    <molecule id="Q9D4H4-2"/>
    <property type="nucleotide sequence ID" value="XM_006510669.4"/>
</dbReference>
<dbReference type="RefSeq" id="XP_006510733.1">
    <molecule id="Q9D4H4-2"/>
    <property type="nucleotide sequence ID" value="XM_006510670.3"/>
</dbReference>
<dbReference type="RefSeq" id="XP_030100553.1">
    <molecule id="Q9D4H4-2"/>
    <property type="nucleotide sequence ID" value="XM_030244693.2"/>
</dbReference>
<dbReference type="RefSeq" id="XP_036011264.1">
    <molecule id="Q9D4H4-2"/>
    <property type="nucleotide sequence ID" value="XM_036155371.1"/>
</dbReference>
<dbReference type="SMR" id="Q9D4H4"/>
<dbReference type="BioGRID" id="217693">
    <property type="interactions" value="10"/>
</dbReference>
<dbReference type="FunCoup" id="Q9D4H4">
    <property type="interactions" value="274"/>
</dbReference>
<dbReference type="STRING" id="10090.ENSMUSP00000013220"/>
<dbReference type="iPTMnet" id="Q9D4H4"/>
<dbReference type="PhosphoSitePlus" id="Q9D4H4"/>
<dbReference type="PaxDb" id="10090-ENSMUSP00000013220"/>
<dbReference type="PeptideAtlas" id="Q9D4H4"/>
<dbReference type="ProteomicsDB" id="296404">
    <molecule id="Q9D4H4-1"/>
</dbReference>
<dbReference type="ProteomicsDB" id="296405">
    <molecule id="Q9D4H4-2"/>
</dbReference>
<dbReference type="Antibodypedia" id="654">
    <property type="antibodies" value="136 antibodies from 26 providers"/>
</dbReference>
<dbReference type="DNASU" id="75723"/>
<dbReference type="Ensembl" id="ENSMUST00000013220.8">
    <molecule id="Q9D4H4-1"/>
    <property type="protein sequence ID" value="ENSMUSP00000013220.7"/>
    <property type="gene ID" value="ENSMUSG00000013076.18"/>
</dbReference>
<dbReference type="GeneID" id="75723"/>
<dbReference type="KEGG" id="mmu:75723"/>
<dbReference type="UCSC" id="uc009oep.1">
    <molecule id="Q9D4H4-1"/>
    <property type="organism name" value="mouse"/>
</dbReference>
<dbReference type="AGR" id="MGI:1922973"/>
<dbReference type="CTD" id="154810"/>
<dbReference type="MGI" id="MGI:1922973">
    <property type="gene designation" value="Amotl1"/>
</dbReference>
<dbReference type="VEuPathDB" id="HostDB:ENSMUSG00000013076"/>
<dbReference type="eggNOG" id="ENOG502QVI5">
    <property type="taxonomic scope" value="Eukaryota"/>
</dbReference>
<dbReference type="GeneTree" id="ENSGT00940000160158"/>
<dbReference type="HOGENOM" id="CLU_009937_1_0_1"/>
<dbReference type="InParanoid" id="Q9D4H4"/>
<dbReference type="OrthoDB" id="5974715at2759"/>
<dbReference type="PhylomeDB" id="Q9D4H4"/>
<dbReference type="TreeFam" id="TF333368"/>
<dbReference type="Reactome" id="R-MMU-2028269">
    <property type="pathway name" value="Signaling by Hippo"/>
</dbReference>
<dbReference type="BioGRID-ORCS" id="75723">
    <property type="hits" value="1 hit in 78 CRISPR screens"/>
</dbReference>
<dbReference type="ChiTaRS" id="Amotl1">
    <property type="organism name" value="mouse"/>
</dbReference>
<dbReference type="PRO" id="PR:Q9D4H4"/>
<dbReference type="Proteomes" id="UP000000589">
    <property type="component" value="Chromosome 9"/>
</dbReference>
<dbReference type="RNAct" id="Q9D4H4">
    <property type="molecule type" value="protein"/>
</dbReference>
<dbReference type="Bgee" id="ENSMUSG00000013076">
    <property type="expression patterns" value="Expressed in manus and 216 other cell types or tissues"/>
</dbReference>
<dbReference type="ExpressionAtlas" id="Q9D4H4">
    <property type="expression patterns" value="baseline and differential"/>
</dbReference>
<dbReference type="GO" id="GO:0016324">
    <property type="term" value="C:apical plasma membrane"/>
    <property type="evidence" value="ECO:0000314"/>
    <property type="project" value="MGI"/>
</dbReference>
<dbReference type="GO" id="GO:0005923">
    <property type="term" value="C:bicellular tight junction"/>
    <property type="evidence" value="ECO:0000314"/>
    <property type="project" value="MGI"/>
</dbReference>
<dbReference type="GO" id="GO:0031410">
    <property type="term" value="C:cytoplasmic vesicle"/>
    <property type="evidence" value="ECO:0000314"/>
    <property type="project" value="MGI"/>
</dbReference>
<dbReference type="GO" id="GO:0030027">
    <property type="term" value="C:lamellipodium"/>
    <property type="evidence" value="ECO:0000314"/>
    <property type="project" value="MGI"/>
</dbReference>
<dbReference type="GO" id="GO:0042802">
    <property type="term" value="F:identical protein binding"/>
    <property type="evidence" value="ECO:0000266"/>
    <property type="project" value="MGI"/>
</dbReference>
<dbReference type="GO" id="GO:0043534">
    <property type="term" value="P:blood vessel endothelial cell migration"/>
    <property type="evidence" value="ECO:0000315"/>
    <property type="project" value="MGI"/>
</dbReference>
<dbReference type="GO" id="GO:0003365">
    <property type="term" value="P:establishment of cell polarity involved in ameboidal cell migration"/>
    <property type="evidence" value="ECO:0000315"/>
    <property type="project" value="MGI"/>
</dbReference>
<dbReference type="GO" id="GO:0035329">
    <property type="term" value="P:hippo signaling"/>
    <property type="evidence" value="ECO:0000266"/>
    <property type="project" value="MGI"/>
</dbReference>
<dbReference type="GO" id="GO:0043536">
    <property type="term" value="P:positive regulation of blood vessel endothelial cell migration"/>
    <property type="evidence" value="ECO:0000315"/>
    <property type="project" value="MGI"/>
</dbReference>
<dbReference type="GO" id="GO:0016055">
    <property type="term" value="P:Wnt signaling pathway"/>
    <property type="evidence" value="ECO:0007669"/>
    <property type="project" value="UniProtKB-KW"/>
</dbReference>
<dbReference type="InterPro" id="IPR009114">
    <property type="entry name" value="Angiomotin"/>
</dbReference>
<dbReference type="InterPro" id="IPR051747">
    <property type="entry name" value="Angiomotin-like"/>
</dbReference>
<dbReference type="InterPro" id="IPR024646">
    <property type="entry name" value="Angiomotin_C"/>
</dbReference>
<dbReference type="PANTHER" id="PTHR14826">
    <property type="entry name" value="ANGIOMOTIN"/>
    <property type="match status" value="1"/>
</dbReference>
<dbReference type="PANTHER" id="PTHR14826:SF12">
    <property type="entry name" value="ANGIOMOTIN-LIKE PROTEIN 1"/>
    <property type="match status" value="1"/>
</dbReference>
<dbReference type="Pfam" id="PF12240">
    <property type="entry name" value="Angiomotin_C"/>
    <property type="match status" value="1"/>
</dbReference>
<dbReference type="PRINTS" id="PR01807">
    <property type="entry name" value="ANGIOMOTIN"/>
</dbReference>
<name>AMOL1_MOUSE</name>
<feature type="chain" id="PRO_0000190671" description="Angiomotin-like protein 1">
    <location>
        <begin position="1"/>
        <end position="968"/>
    </location>
</feature>
<feature type="region of interest" description="Disordered" evidence="4">
    <location>
        <begin position="152"/>
        <end position="258"/>
    </location>
</feature>
<feature type="region of interest" description="Disordered" evidence="4">
    <location>
        <begin position="285"/>
        <end position="343"/>
    </location>
</feature>
<feature type="region of interest" description="Disordered" evidence="4">
    <location>
        <begin position="721"/>
        <end position="742"/>
    </location>
</feature>
<feature type="region of interest" description="Disordered" evidence="4">
    <location>
        <begin position="785"/>
        <end position="834"/>
    </location>
</feature>
<feature type="region of interest" description="Disordered" evidence="4">
    <location>
        <begin position="853"/>
        <end position="956"/>
    </location>
</feature>
<feature type="coiled-coil region" evidence="3">
    <location>
        <begin position="271"/>
        <end position="291"/>
    </location>
</feature>
<feature type="coiled-coil region" evidence="3">
    <location>
        <begin position="449"/>
        <end position="645"/>
    </location>
</feature>
<feature type="coiled-coil region" evidence="3">
    <location>
        <begin position="676"/>
        <end position="705"/>
    </location>
</feature>
<feature type="coiled-coil region" evidence="3">
    <location>
        <begin position="748"/>
        <end position="773"/>
    </location>
</feature>
<feature type="short sequence motif" description="PDZ-binding">
    <location>
        <begin position="965"/>
        <end position="968"/>
    </location>
</feature>
<feature type="compositionally biased region" description="Polar residues" evidence="4">
    <location>
        <begin position="152"/>
        <end position="164"/>
    </location>
</feature>
<feature type="compositionally biased region" description="Polar residues" evidence="4">
    <location>
        <begin position="177"/>
        <end position="187"/>
    </location>
</feature>
<feature type="compositionally biased region" description="Low complexity" evidence="4">
    <location>
        <begin position="203"/>
        <end position="224"/>
    </location>
</feature>
<feature type="compositionally biased region" description="Polar residues" evidence="4">
    <location>
        <begin position="726"/>
        <end position="738"/>
    </location>
</feature>
<feature type="compositionally biased region" description="Low complexity" evidence="4">
    <location>
        <begin position="853"/>
        <end position="878"/>
    </location>
</feature>
<feature type="modified residue" description="Phosphoserine" evidence="2">
    <location>
        <position position="253"/>
    </location>
</feature>
<feature type="modified residue" description="Phosphoserine" evidence="2">
    <location>
        <position position="281"/>
    </location>
</feature>
<feature type="modified residue" description="Phosphoserine" evidence="2">
    <location>
        <position position="307"/>
    </location>
</feature>
<feature type="modified residue" description="Phosphoserine" evidence="2">
    <location>
        <position position="731"/>
    </location>
</feature>
<feature type="modified residue" description="Phosphoserine" evidence="2">
    <location>
        <position position="804"/>
    </location>
</feature>
<feature type="modified residue" description="Phosphoserine" evidence="8">
    <location>
        <position position="816"/>
    </location>
</feature>
<feature type="modified residue" description="Phosphoserine" evidence="2">
    <location>
        <position position="840"/>
    </location>
</feature>
<feature type="modified residue" description="Phosphoserine" evidence="2">
    <location>
        <position position="912"/>
    </location>
</feature>
<feature type="modified residue" description="Phosphoserine" evidence="2">
    <location>
        <position position="918"/>
    </location>
</feature>
<feature type="splice variant" id="VSP_044080" description="In isoform 2." evidence="6">
    <location>
        <begin position="1"/>
        <end position="86"/>
    </location>
</feature>
<feature type="sequence conflict" description="In Ref. 2; BAD90163." evidence="7" ref="2">
    <location>
        <position position="221"/>
    </location>
</feature>
<comment type="function">
    <text evidence="1">Inhibits the Wnt/beta-catenin signaling pathway, probably by recruiting CTNNB1 to recycling endosomes and hence preventing its translocation to the nucleus.</text>
</comment>
<comment type="subcellular location">
    <subcellularLocation>
        <location evidence="5">Cell junction</location>
        <location evidence="5">Tight junction</location>
    </subcellularLocation>
</comment>
<comment type="alternative products">
    <event type="alternative splicing"/>
    <isoform>
        <id>Q9D4H4-1</id>
        <name>1</name>
        <sequence type="displayed"/>
    </isoform>
    <isoform>
        <id>Q9D4H4-2</id>
        <name>2</name>
        <sequence type="described" ref="VSP_044080"/>
    </isoform>
</comment>
<comment type="tissue specificity">
    <text evidence="5">Expressed in exocrine glands, including pancreas, submandibular gland, lacrimal gland, parotid gland and sublingual gland (at protein level).</text>
</comment>
<comment type="PTM">
    <text evidence="1">Polyubiquitinated by NEDD4, leading to proteasomal degradation.</text>
</comment>
<comment type="similarity">
    <text evidence="7">Belongs to the angiomotin family.</text>
</comment>
<organism>
    <name type="scientific">Mus musculus</name>
    <name type="common">Mouse</name>
    <dbReference type="NCBI Taxonomy" id="10090"/>
    <lineage>
        <taxon>Eukaryota</taxon>
        <taxon>Metazoa</taxon>
        <taxon>Chordata</taxon>
        <taxon>Craniata</taxon>
        <taxon>Vertebrata</taxon>
        <taxon>Euteleostomi</taxon>
        <taxon>Mammalia</taxon>
        <taxon>Eutheria</taxon>
        <taxon>Euarchontoglires</taxon>
        <taxon>Glires</taxon>
        <taxon>Rodentia</taxon>
        <taxon>Myomorpha</taxon>
        <taxon>Muroidea</taxon>
        <taxon>Muridae</taxon>
        <taxon>Murinae</taxon>
        <taxon>Mus</taxon>
        <taxon>Mus</taxon>
    </lineage>
</organism>
<proteinExistence type="evidence at protein level"/>
<evidence type="ECO:0000250" key="1"/>
<evidence type="ECO:0000250" key="2">
    <source>
        <dbReference type="UniProtKB" id="Q8IY63"/>
    </source>
</evidence>
<evidence type="ECO:0000255" key="3"/>
<evidence type="ECO:0000256" key="4">
    <source>
        <dbReference type="SAM" id="MobiDB-lite"/>
    </source>
</evidence>
<evidence type="ECO:0000269" key="5">
    <source>
    </source>
</evidence>
<evidence type="ECO:0000303" key="6">
    <source>
    </source>
</evidence>
<evidence type="ECO:0000305" key="7"/>
<evidence type="ECO:0007744" key="8">
    <source>
    </source>
</evidence>
<gene>
    <name type="primary">Amotl1</name>
</gene>
<accession>Q9D4H4</accession>
<accession>B9EKN5</accession>
<accession>Q571F1</accession>